<reference key="1">
    <citation type="journal article" date="1997" name="Nature">
        <title>The nucleotide sequence of Saccharomyces cerevisiae chromosome XII.</title>
        <authorList>
            <person name="Johnston M."/>
            <person name="Hillier L.W."/>
            <person name="Riles L."/>
            <person name="Albermann K."/>
            <person name="Andre B."/>
            <person name="Ansorge W."/>
            <person name="Benes V."/>
            <person name="Brueckner M."/>
            <person name="Delius H."/>
            <person name="Dubois E."/>
            <person name="Duesterhoeft A."/>
            <person name="Entian K.-D."/>
            <person name="Floeth M."/>
            <person name="Goffeau A."/>
            <person name="Hebling U."/>
            <person name="Heumann K."/>
            <person name="Heuss-Neitzel D."/>
            <person name="Hilbert H."/>
            <person name="Hilger F."/>
            <person name="Kleine K."/>
            <person name="Koetter P."/>
            <person name="Louis E.J."/>
            <person name="Messenguy F."/>
            <person name="Mewes H.-W."/>
            <person name="Miosga T."/>
            <person name="Moestl D."/>
            <person name="Mueller-Auer S."/>
            <person name="Nentwich U."/>
            <person name="Obermaier B."/>
            <person name="Piravandi E."/>
            <person name="Pohl T.M."/>
            <person name="Portetelle D."/>
            <person name="Purnelle B."/>
            <person name="Rechmann S."/>
            <person name="Rieger M."/>
            <person name="Rinke M."/>
            <person name="Rose M."/>
            <person name="Scharfe M."/>
            <person name="Scherens B."/>
            <person name="Scholler P."/>
            <person name="Schwager C."/>
            <person name="Schwarz S."/>
            <person name="Underwood A.P."/>
            <person name="Urrestarazu L.A."/>
            <person name="Vandenbol M."/>
            <person name="Verhasselt P."/>
            <person name="Vierendeels F."/>
            <person name="Voet M."/>
            <person name="Volckaert G."/>
            <person name="Voss H."/>
            <person name="Wambutt R."/>
            <person name="Wedler E."/>
            <person name="Wedler H."/>
            <person name="Zimmermann F.K."/>
            <person name="Zollner A."/>
            <person name="Hani J."/>
            <person name="Hoheisel J.D."/>
        </authorList>
    </citation>
    <scope>NUCLEOTIDE SEQUENCE [LARGE SCALE GENOMIC DNA]</scope>
    <source>
        <strain>ATCC 204508 / S288c</strain>
    </source>
</reference>
<reference key="2">
    <citation type="journal article" date="2014" name="G3 (Bethesda)">
        <title>The reference genome sequence of Saccharomyces cerevisiae: Then and now.</title>
        <authorList>
            <person name="Engel S.R."/>
            <person name="Dietrich F.S."/>
            <person name="Fisk D.G."/>
            <person name="Binkley G."/>
            <person name="Balakrishnan R."/>
            <person name="Costanzo M.C."/>
            <person name="Dwight S.S."/>
            <person name="Hitz B.C."/>
            <person name="Karra K."/>
            <person name="Nash R.S."/>
            <person name="Weng S."/>
            <person name="Wong E.D."/>
            <person name="Lloyd P."/>
            <person name="Skrzypek M.S."/>
            <person name="Miyasato S.R."/>
            <person name="Simison M."/>
            <person name="Cherry J.M."/>
        </authorList>
    </citation>
    <scope>GENOME REANNOTATION</scope>
    <source>
        <strain>ATCC 204508 / S288c</strain>
    </source>
</reference>
<reference key="3">
    <citation type="journal article" date="2000" name="Yeast">
        <title>Polymorphism of Saccharomyces cerevisiae aquaporins.</title>
        <authorList>
            <person name="Laize V."/>
            <person name="Tacnet F."/>
            <person name="Ripoche P."/>
            <person name="Hohmann S."/>
        </authorList>
    </citation>
    <scope>POLYMORPHISM</scope>
</reference>
<reference key="4">
    <citation type="journal article" date="2001" name="Proc. Natl. Acad. Sci. U.S.A.">
        <title>Aquaporins in Saccharomyces: characterization of a second functional water channel protein.</title>
        <authorList>
            <person name="Carbrey J.M."/>
            <person name="Bonhivers M."/>
            <person name="Boeke J.D."/>
            <person name="Agre P."/>
        </authorList>
    </citation>
    <scope>POLYMORPHISM</scope>
</reference>
<reference key="5">
    <citation type="journal article" date="2003" name="Nature">
        <title>Global analysis of protein localization in budding yeast.</title>
        <authorList>
            <person name="Huh W.-K."/>
            <person name="Falvo J.V."/>
            <person name="Gerke L.C."/>
            <person name="Carroll A.S."/>
            <person name="Howson R.W."/>
            <person name="Weissman J.S."/>
            <person name="O'Shea E.K."/>
        </authorList>
    </citation>
    <scope>SUBCELLULAR LOCATION [LARGE SCALE ANALYSIS]</scope>
</reference>
<organism>
    <name type="scientific">Saccharomyces cerevisiae (strain ATCC 204508 / S288c)</name>
    <name type="common">Baker's yeast</name>
    <dbReference type="NCBI Taxonomy" id="559292"/>
    <lineage>
        <taxon>Eukaryota</taxon>
        <taxon>Fungi</taxon>
        <taxon>Dikarya</taxon>
        <taxon>Ascomycota</taxon>
        <taxon>Saccharomycotina</taxon>
        <taxon>Saccharomycetes</taxon>
        <taxon>Saccharomycetales</taxon>
        <taxon>Saccharomycetaceae</taxon>
        <taxon>Saccharomyces</taxon>
    </lineage>
</organism>
<protein>
    <recommendedName>
        <fullName>Aquaporin-like protein 2</fullName>
    </recommendedName>
    <alternativeName>
        <fullName>Truncated aquaporin-2</fullName>
    </alternativeName>
</protein>
<gene>
    <name type="primary">AQY2</name>
    <name type="synonym">AQY2-2</name>
    <name type="ordered locus">YLL052C</name>
    <name type="ORF">L0590</name>
</gene>
<accession>P0CD90</accession>
<accession>D6VXV6</accession>
<accession>O93938</accession>
<accession>Q12258</accession>
<accession>Q12302</accession>
<accession>Q9C411</accession>
<evidence type="ECO:0000250" key="1"/>
<evidence type="ECO:0000255" key="2"/>
<evidence type="ECO:0000256" key="3">
    <source>
        <dbReference type="SAM" id="MobiDB-lite"/>
    </source>
</evidence>
<evidence type="ECO:0000269" key="4">
    <source>
    </source>
</evidence>
<evidence type="ECO:0000305" key="5"/>
<comment type="function">
    <text evidence="1">Water channel required to facilitate the transport of water across membranes. Involved in freeze tolerance, osmotolerance and cell flocculation in liquid cultures (By similarity). Is non-functional in most laboratory strains.</text>
</comment>
<comment type="subcellular location">
    <subcellularLocation>
        <location evidence="4">Endoplasmic reticulum membrane</location>
        <topology evidence="4">Multi-pass membrane protein</topology>
    </subcellularLocation>
    <subcellularLocation>
        <location evidence="1">Cell membrane</location>
        <topology evidence="4">Multi-pass membrane protein</topology>
    </subcellularLocation>
</comment>
<comment type="induction">
    <text evidence="1">During exponential phase in rich medium and repressed in minimum medium, hyper-osmolar medium or in sporulating conditions.</text>
</comment>
<comment type="domain">
    <text>Aquaporins contain two tandem repeats each containing three membrane-spanning domains and a pore-forming loop with the signature motif Asn-Pro-Ala (NPA).</text>
</comment>
<comment type="similarity">
    <text evidence="5">Belongs to the MIP/aquaporin (TC 1.A.8) family.</text>
</comment>
<comment type="caution">
    <text evidence="5">This is a truncated version of aquaporin-2. In strain S288c and many laboratory strains, a natural 11 bp deletion in position 109 leads to a frameshift, which disrupts the gene coding for this protein and produces two ORFs YLL052C and YLL053C. A contiguous sequence for aquaporin-2 can be found in strain Sigma 1278B (AC P0CD89).</text>
</comment>
<keyword id="KW-1003">Cell membrane</keyword>
<keyword id="KW-0256">Endoplasmic reticulum</keyword>
<keyword id="KW-0472">Membrane</keyword>
<keyword id="KW-1185">Reference proteome</keyword>
<keyword id="KW-0677">Repeat</keyword>
<keyword id="KW-0812">Transmembrane</keyword>
<keyword id="KW-1133">Transmembrane helix</keyword>
<keyword id="KW-0813">Transport</keyword>
<sequence length="149" mass="17024">MSNESNDLEKNISHLDPTGVDNAYIPPEQPETKHSRFNIDRDTLRNHFIAAVGEFCGTFMFLWCAYVICNVANHDVALTTEPEGSHPGQLIMIALGFGFSVMFSIWCFWWGFEPSRFSLFVFGQSHLTSQMCSDVVSSDHCWDGCWWCR</sequence>
<dbReference type="EMBL" id="Z73158">
    <property type="protein sequence ID" value="CAA97506.1"/>
    <property type="molecule type" value="Genomic_DNA"/>
</dbReference>
<dbReference type="EMBL" id="Z47973">
    <property type="protein sequence ID" value="CAA88005.1"/>
    <property type="molecule type" value="Genomic_DNA"/>
</dbReference>
<dbReference type="EMBL" id="BK006945">
    <property type="protein sequence ID" value="DAA09272.1"/>
    <property type="molecule type" value="Genomic_DNA"/>
</dbReference>
<dbReference type="PIR" id="S50968">
    <property type="entry name" value="S50968"/>
</dbReference>
<dbReference type="RefSeq" id="NP_013048.1">
    <property type="nucleotide sequence ID" value="NM_001181872.1"/>
</dbReference>
<dbReference type="SMR" id="P0CD90"/>
<dbReference type="BioGRID" id="31263">
    <property type="interactions" value="13"/>
</dbReference>
<dbReference type="FunCoup" id="P0CD90">
    <property type="interactions" value="44"/>
</dbReference>
<dbReference type="STRING" id="4932.YLL052C"/>
<dbReference type="PaxDb" id="4932-YLL052C"/>
<dbReference type="EnsemblFungi" id="YLL052C_mRNA">
    <property type="protein sequence ID" value="YLL052C"/>
    <property type="gene ID" value="YLL052C"/>
</dbReference>
<dbReference type="GeneID" id="850674"/>
<dbReference type="KEGG" id="sce:YLL052C"/>
<dbReference type="AGR" id="SGD:S000003975"/>
<dbReference type="SGD" id="S000003975">
    <property type="gene designation" value="AQY2"/>
</dbReference>
<dbReference type="VEuPathDB" id="FungiDB:YLL052C"/>
<dbReference type="eggNOG" id="KOG0223">
    <property type="taxonomic scope" value="Eukaryota"/>
</dbReference>
<dbReference type="GeneTree" id="ENSGT00940000176123"/>
<dbReference type="HOGENOM" id="CLU_1750738_0_0_1"/>
<dbReference type="InParanoid" id="P0CD90"/>
<dbReference type="OrthoDB" id="3222at2759"/>
<dbReference type="BioCyc" id="YEAST:G3O-32151-MONOMER"/>
<dbReference type="BioGRID-ORCS" id="850674">
    <property type="hits" value="6 hits in 10 CRISPR screens"/>
</dbReference>
<dbReference type="PRO" id="PR:P0CD90"/>
<dbReference type="Proteomes" id="UP000002311">
    <property type="component" value="Chromosome XII"/>
</dbReference>
<dbReference type="RNAct" id="P0CD90">
    <property type="molecule type" value="protein"/>
</dbReference>
<dbReference type="GO" id="GO:0005829">
    <property type="term" value="C:cytosol"/>
    <property type="evidence" value="ECO:0007005"/>
    <property type="project" value="SGD"/>
</dbReference>
<dbReference type="GO" id="GO:0005789">
    <property type="term" value="C:endoplasmic reticulum membrane"/>
    <property type="evidence" value="ECO:0000314"/>
    <property type="project" value="SGD"/>
</dbReference>
<dbReference type="GO" id="GO:0005886">
    <property type="term" value="C:plasma membrane"/>
    <property type="evidence" value="ECO:0000314"/>
    <property type="project" value="SGD"/>
</dbReference>
<dbReference type="GO" id="GO:0015250">
    <property type="term" value="F:water channel activity"/>
    <property type="evidence" value="ECO:0000314"/>
    <property type="project" value="SGD"/>
</dbReference>
<dbReference type="GO" id="GO:0055085">
    <property type="term" value="P:transmembrane transport"/>
    <property type="evidence" value="ECO:0000314"/>
    <property type="project" value="SGD"/>
</dbReference>
<dbReference type="GO" id="GO:0006833">
    <property type="term" value="P:water transport"/>
    <property type="evidence" value="ECO:0000314"/>
    <property type="project" value="SGD"/>
</dbReference>
<dbReference type="FunFam" id="1.20.1080.10:FF:000049">
    <property type="entry name" value="Aquaporin-like protein 2"/>
    <property type="match status" value="1"/>
</dbReference>
<dbReference type="Gene3D" id="1.20.1080.10">
    <property type="entry name" value="Glycerol uptake facilitator protein"/>
    <property type="match status" value="1"/>
</dbReference>
<dbReference type="InterPro" id="IPR023271">
    <property type="entry name" value="Aquaporin-like"/>
</dbReference>
<dbReference type="SUPFAM" id="SSF81338">
    <property type="entry name" value="Aquaporin-like"/>
    <property type="match status" value="1"/>
</dbReference>
<feature type="chain" id="PRO_0000391651" description="Aquaporin-like protein 2">
    <location>
        <begin position="1"/>
        <end position="149"/>
    </location>
</feature>
<feature type="topological domain" description="Cytoplasmic" evidence="1">
    <location>
        <begin position="1"/>
        <end position="47"/>
    </location>
</feature>
<feature type="transmembrane region" description="Helical" evidence="2">
    <location>
        <begin position="48"/>
        <end position="68"/>
    </location>
</feature>
<feature type="topological domain" description="Extracellular" evidence="1">
    <location>
        <begin position="69"/>
        <end position="89"/>
    </location>
</feature>
<feature type="transmembrane region" description="Helical" evidence="2">
    <location>
        <begin position="90"/>
        <end position="110"/>
    </location>
</feature>
<feature type="topological domain" description="Cytoplasmic" evidence="1">
    <location>
        <begin position="111"/>
        <end position="149"/>
    </location>
</feature>
<feature type="region of interest" description="Disordered" evidence="3">
    <location>
        <begin position="1"/>
        <end position="35"/>
    </location>
</feature>
<proteinExistence type="evidence at protein level"/>
<name>AQY2_YEAST</name>